<dbReference type="EC" id="6.1.1.11" evidence="1"/>
<dbReference type="EMBL" id="X04616">
    <property type="protein sequence ID" value="CAD55627.1"/>
    <property type="status" value="ALT_INIT"/>
    <property type="molecule type" value="Genomic_DNA"/>
</dbReference>
<dbReference type="EMBL" id="CP000100">
    <property type="protein sequence ID" value="ABB56481.1"/>
    <property type="status" value="ALT_INIT"/>
    <property type="molecule type" value="Genomic_DNA"/>
</dbReference>
<dbReference type="RefSeq" id="WP_011243380.1">
    <property type="nucleotide sequence ID" value="NZ_JACJTX010000002.1"/>
</dbReference>
<dbReference type="SMR" id="Q8GMR7"/>
<dbReference type="STRING" id="1140.Synpcc7942_0449"/>
<dbReference type="PaxDb" id="1140-Synpcc7942_0449"/>
<dbReference type="GeneID" id="72429271"/>
<dbReference type="KEGG" id="syf:Synpcc7942_0449"/>
<dbReference type="eggNOG" id="COG0172">
    <property type="taxonomic scope" value="Bacteria"/>
</dbReference>
<dbReference type="HOGENOM" id="CLU_023797_1_1_3"/>
<dbReference type="OrthoDB" id="9804647at2"/>
<dbReference type="BioCyc" id="SYNEL:SYNPCC7942_0449-MONOMER"/>
<dbReference type="UniPathway" id="UPA00906">
    <property type="reaction ID" value="UER00895"/>
</dbReference>
<dbReference type="Proteomes" id="UP000889800">
    <property type="component" value="Chromosome"/>
</dbReference>
<dbReference type="GO" id="GO:0005737">
    <property type="term" value="C:cytoplasm"/>
    <property type="evidence" value="ECO:0007669"/>
    <property type="project" value="UniProtKB-SubCell"/>
</dbReference>
<dbReference type="GO" id="GO:0005524">
    <property type="term" value="F:ATP binding"/>
    <property type="evidence" value="ECO:0007669"/>
    <property type="project" value="UniProtKB-UniRule"/>
</dbReference>
<dbReference type="GO" id="GO:0004828">
    <property type="term" value="F:serine-tRNA ligase activity"/>
    <property type="evidence" value="ECO:0007669"/>
    <property type="project" value="UniProtKB-UniRule"/>
</dbReference>
<dbReference type="GO" id="GO:0016260">
    <property type="term" value="P:selenocysteine biosynthetic process"/>
    <property type="evidence" value="ECO:0007669"/>
    <property type="project" value="UniProtKB-UniRule"/>
</dbReference>
<dbReference type="GO" id="GO:0006434">
    <property type="term" value="P:seryl-tRNA aminoacylation"/>
    <property type="evidence" value="ECO:0007669"/>
    <property type="project" value="UniProtKB-UniRule"/>
</dbReference>
<dbReference type="CDD" id="cd00770">
    <property type="entry name" value="SerRS_core"/>
    <property type="match status" value="1"/>
</dbReference>
<dbReference type="Gene3D" id="3.30.930.10">
    <property type="entry name" value="Bira Bifunctional Protein, Domain 2"/>
    <property type="match status" value="1"/>
</dbReference>
<dbReference type="Gene3D" id="1.10.287.40">
    <property type="entry name" value="Serine-tRNA synthetase, tRNA binding domain"/>
    <property type="match status" value="1"/>
</dbReference>
<dbReference type="HAMAP" id="MF_00176">
    <property type="entry name" value="Ser_tRNA_synth_type1"/>
    <property type="match status" value="1"/>
</dbReference>
<dbReference type="InterPro" id="IPR002314">
    <property type="entry name" value="aa-tRNA-synt_IIb"/>
</dbReference>
<dbReference type="InterPro" id="IPR006195">
    <property type="entry name" value="aa-tRNA-synth_II"/>
</dbReference>
<dbReference type="InterPro" id="IPR045864">
    <property type="entry name" value="aa-tRNA-synth_II/BPL/LPL"/>
</dbReference>
<dbReference type="InterPro" id="IPR002317">
    <property type="entry name" value="Ser-tRNA-ligase_type_1"/>
</dbReference>
<dbReference type="InterPro" id="IPR015866">
    <property type="entry name" value="Ser-tRNA-synth_1_N"/>
</dbReference>
<dbReference type="InterPro" id="IPR042103">
    <property type="entry name" value="SerRS_1_N_sf"/>
</dbReference>
<dbReference type="InterPro" id="IPR033729">
    <property type="entry name" value="SerRS_core"/>
</dbReference>
<dbReference type="InterPro" id="IPR010978">
    <property type="entry name" value="tRNA-bd_arm"/>
</dbReference>
<dbReference type="NCBIfam" id="TIGR00414">
    <property type="entry name" value="serS"/>
    <property type="match status" value="1"/>
</dbReference>
<dbReference type="PANTHER" id="PTHR43697:SF1">
    <property type="entry name" value="SERINE--TRNA LIGASE"/>
    <property type="match status" value="1"/>
</dbReference>
<dbReference type="PANTHER" id="PTHR43697">
    <property type="entry name" value="SERYL-TRNA SYNTHETASE"/>
    <property type="match status" value="1"/>
</dbReference>
<dbReference type="Pfam" id="PF02403">
    <property type="entry name" value="Seryl_tRNA_N"/>
    <property type="match status" value="1"/>
</dbReference>
<dbReference type="Pfam" id="PF00587">
    <property type="entry name" value="tRNA-synt_2b"/>
    <property type="match status" value="1"/>
</dbReference>
<dbReference type="PIRSF" id="PIRSF001529">
    <property type="entry name" value="Ser-tRNA-synth_IIa"/>
    <property type="match status" value="1"/>
</dbReference>
<dbReference type="PRINTS" id="PR00981">
    <property type="entry name" value="TRNASYNTHSER"/>
</dbReference>
<dbReference type="SUPFAM" id="SSF55681">
    <property type="entry name" value="Class II aaRS and biotin synthetases"/>
    <property type="match status" value="1"/>
</dbReference>
<dbReference type="SUPFAM" id="SSF46589">
    <property type="entry name" value="tRNA-binding arm"/>
    <property type="match status" value="1"/>
</dbReference>
<dbReference type="PROSITE" id="PS50862">
    <property type="entry name" value="AA_TRNA_LIGASE_II"/>
    <property type="match status" value="1"/>
</dbReference>
<gene>
    <name evidence="1" type="primary">serS</name>
    <name type="ordered locus">Synpcc7942_0449</name>
    <name type="ORF">sek0021</name>
</gene>
<accession>Q8GMR7</accession>
<accession>Q31R38</accession>
<organism>
    <name type="scientific">Synechococcus elongatus (strain ATCC 33912 / PCC 7942 / FACHB-805)</name>
    <name type="common">Anacystis nidulans R2</name>
    <dbReference type="NCBI Taxonomy" id="1140"/>
    <lineage>
        <taxon>Bacteria</taxon>
        <taxon>Bacillati</taxon>
        <taxon>Cyanobacteriota</taxon>
        <taxon>Cyanophyceae</taxon>
        <taxon>Synechococcales</taxon>
        <taxon>Synechococcaceae</taxon>
        <taxon>Synechococcus</taxon>
    </lineage>
</organism>
<name>SYS_SYNE7</name>
<protein>
    <recommendedName>
        <fullName evidence="1">Serine--tRNA ligase</fullName>
        <ecNumber evidence="1">6.1.1.11</ecNumber>
    </recommendedName>
    <alternativeName>
        <fullName evidence="1">Seryl-tRNA synthetase</fullName>
        <shortName evidence="1">SerRS</shortName>
    </alternativeName>
    <alternativeName>
        <fullName evidence="1">Seryl-tRNA(Ser/Sec) synthetase</fullName>
    </alternativeName>
</protein>
<keyword id="KW-0030">Aminoacyl-tRNA synthetase</keyword>
<keyword id="KW-0067">ATP-binding</keyword>
<keyword id="KW-0963">Cytoplasm</keyword>
<keyword id="KW-0436">Ligase</keyword>
<keyword id="KW-0547">Nucleotide-binding</keyword>
<keyword id="KW-0648">Protein biosynthesis</keyword>
<keyword id="KW-1185">Reference proteome</keyword>
<reference key="1">
    <citation type="submission" date="2002-07" db="EMBL/GenBank/DDBJ databases">
        <title>Synechococcus elongatus PCC 7942 cosmid 3E9.</title>
        <authorList>
            <person name="Holtman C.K."/>
            <person name="Sandoval P."/>
            <person name="Chen Y."/>
            <person name="Socias T."/>
            <person name="Mohler B.J."/>
            <person name="McMurtry S."/>
            <person name="Gonzalez A."/>
            <person name="Salinas I."/>
            <person name="Golden S.S."/>
            <person name="Youderian P."/>
        </authorList>
    </citation>
    <scope>NUCLEOTIDE SEQUENCE [GENOMIC DNA]</scope>
</reference>
<reference key="2">
    <citation type="submission" date="2005-08" db="EMBL/GenBank/DDBJ databases">
        <title>Complete sequence of chromosome 1 of Synechococcus elongatus PCC 7942.</title>
        <authorList>
            <consortium name="US DOE Joint Genome Institute"/>
            <person name="Copeland A."/>
            <person name="Lucas S."/>
            <person name="Lapidus A."/>
            <person name="Barry K."/>
            <person name="Detter J.C."/>
            <person name="Glavina T."/>
            <person name="Hammon N."/>
            <person name="Israni S."/>
            <person name="Pitluck S."/>
            <person name="Schmutz J."/>
            <person name="Larimer F."/>
            <person name="Land M."/>
            <person name="Kyrpides N."/>
            <person name="Lykidis A."/>
            <person name="Golden S."/>
            <person name="Richardson P."/>
        </authorList>
    </citation>
    <scope>NUCLEOTIDE SEQUENCE [LARGE SCALE GENOMIC DNA]</scope>
    <source>
        <strain>ATCC 33912 / PCC 7942 / FACHB-805</strain>
    </source>
</reference>
<evidence type="ECO:0000255" key="1">
    <source>
        <dbReference type="HAMAP-Rule" id="MF_00176"/>
    </source>
</evidence>
<evidence type="ECO:0000305" key="2"/>
<comment type="function">
    <text evidence="1">Catalyzes the attachment of serine to tRNA(Ser). Is also able to aminoacylate tRNA(Sec) with serine, to form the misacylated tRNA L-seryl-tRNA(Sec), which will be further converted into selenocysteinyl-tRNA(Sec).</text>
</comment>
<comment type="catalytic activity">
    <reaction evidence="1">
        <text>tRNA(Ser) + L-serine + ATP = L-seryl-tRNA(Ser) + AMP + diphosphate + H(+)</text>
        <dbReference type="Rhea" id="RHEA:12292"/>
        <dbReference type="Rhea" id="RHEA-COMP:9669"/>
        <dbReference type="Rhea" id="RHEA-COMP:9703"/>
        <dbReference type="ChEBI" id="CHEBI:15378"/>
        <dbReference type="ChEBI" id="CHEBI:30616"/>
        <dbReference type="ChEBI" id="CHEBI:33019"/>
        <dbReference type="ChEBI" id="CHEBI:33384"/>
        <dbReference type="ChEBI" id="CHEBI:78442"/>
        <dbReference type="ChEBI" id="CHEBI:78533"/>
        <dbReference type="ChEBI" id="CHEBI:456215"/>
        <dbReference type="EC" id="6.1.1.11"/>
    </reaction>
</comment>
<comment type="catalytic activity">
    <reaction evidence="1">
        <text>tRNA(Sec) + L-serine + ATP = L-seryl-tRNA(Sec) + AMP + diphosphate + H(+)</text>
        <dbReference type="Rhea" id="RHEA:42580"/>
        <dbReference type="Rhea" id="RHEA-COMP:9742"/>
        <dbReference type="Rhea" id="RHEA-COMP:10128"/>
        <dbReference type="ChEBI" id="CHEBI:15378"/>
        <dbReference type="ChEBI" id="CHEBI:30616"/>
        <dbReference type="ChEBI" id="CHEBI:33019"/>
        <dbReference type="ChEBI" id="CHEBI:33384"/>
        <dbReference type="ChEBI" id="CHEBI:78442"/>
        <dbReference type="ChEBI" id="CHEBI:78533"/>
        <dbReference type="ChEBI" id="CHEBI:456215"/>
        <dbReference type="EC" id="6.1.1.11"/>
    </reaction>
</comment>
<comment type="pathway">
    <text evidence="1">Aminoacyl-tRNA biosynthesis; selenocysteinyl-tRNA(Sec) biosynthesis; L-seryl-tRNA(Sec) from L-serine and tRNA(Sec): step 1/1.</text>
</comment>
<comment type="subunit">
    <text evidence="1">Homodimer. The tRNA molecule binds across the dimer.</text>
</comment>
<comment type="subcellular location">
    <subcellularLocation>
        <location evidence="1">Cytoplasm</location>
    </subcellularLocation>
</comment>
<comment type="domain">
    <text evidence="1">Consists of two distinct domains, a catalytic core and a N-terminal extension that is involved in tRNA binding.</text>
</comment>
<comment type="similarity">
    <text evidence="1">Belongs to the class-II aminoacyl-tRNA synthetase family. Type-1 seryl-tRNA synthetase subfamily.</text>
</comment>
<comment type="sequence caution" evidence="2">
    <conflict type="erroneous initiation">
        <sequence resource="EMBL-CDS" id="ABB56481"/>
    </conflict>
</comment>
<comment type="sequence caution" evidence="2">
    <conflict type="erroneous initiation">
        <sequence resource="EMBL-CDS" id="CAD55627"/>
    </conflict>
</comment>
<proteinExistence type="inferred from homology"/>
<sequence length="428" mass="48637">MLDLRLLRENPEATQARLDRRHSSYDIQPLLSLDQQVRQWEQERTQLQARSNEIGRSVGQKMREGADPQSEEIAALREEGNQLKQQIADLEQQERQVRSELDTYLLTLPNLPDETVPLGSSEDENREIHRWGDDRIREGEFAPHWEIGERLGLFDFERSTRIAQSRFVTLLGAGAALERALIAFMLDRQTAAGYTEVAPPYLINSASLTASGQLPKFSEESFRCDRDDLWLTPTAEVPLTSLYRDEILSADQLPLRYCAYTPCFRREAGSYGRDTRGLIRLHQFNKVELYQFVHPDHSEAAHQQLLANAEAILQALELPYRTIELCTGDLGFSAQKTYDIEVWLPSAGRYREISSCSNCGDFQARRANIRFKEAGQKGTRFVHTLNGSGLAVGRTMAAVLENYQQPDGSVRVPEALQPYLRQTVIGQP</sequence>
<feature type="chain" id="PRO_0000122141" description="Serine--tRNA ligase">
    <location>
        <begin position="1"/>
        <end position="428"/>
    </location>
</feature>
<feature type="binding site" evidence="1">
    <location>
        <begin position="234"/>
        <end position="236"/>
    </location>
    <ligand>
        <name>L-serine</name>
        <dbReference type="ChEBI" id="CHEBI:33384"/>
    </ligand>
</feature>
<feature type="binding site" evidence="1">
    <location>
        <begin position="265"/>
        <end position="267"/>
    </location>
    <ligand>
        <name>ATP</name>
        <dbReference type="ChEBI" id="CHEBI:30616"/>
    </ligand>
</feature>
<feature type="binding site" evidence="1">
    <location>
        <position position="288"/>
    </location>
    <ligand>
        <name>L-serine</name>
        <dbReference type="ChEBI" id="CHEBI:33384"/>
    </ligand>
</feature>
<feature type="binding site" evidence="1">
    <location>
        <begin position="352"/>
        <end position="355"/>
    </location>
    <ligand>
        <name>ATP</name>
        <dbReference type="ChEBI" id="CHEBI:30616"/>
    </ligand>
</feature>
<feature type="binding site" evidence="1">
    <location>
        <position position="388"/>
    </location>
    <ligand>
        <name>L-serine</name>
        <dbReference type="ChEBI" id="CHEBI:33384"/>
    </ligand>
</feature>
<feature type="sequence conflict" description="In Ref. 1." evidence="2" ref="1">
    <original>YLRQTVIGQP</original>
    <variation>TFARP</variation>
    <location>
        <begin position="419"/>
        <end position="428"/>
    </location>
</feature>